<proteinExistence type="inferred from homology"/>
<reference key="1">
    <citation type="journal article" date="2007" name="J. Bacteriol.">
        <title>Genome of the opportunistic pathogen Streptococcus sanguinis.</title>
        <authorList>
            <person name="Xu P."/>
            <person name="Alves J.M."/>
            <person name="Kitten T."/>
            <person name="Brown A."/>
            <person name="Chen Z."/>
            <person name="Ozaki L.S."/>
            <person name="Manque P."/>
            <person name="Ge X."/>
            <person name="Serrano M.G."/>
            <person name="Puiu D."/>
            <person name="Hendricks S."/>
            <person name="Wang Y."/>
            <person name="Chaplin M.D."/>
            <person name="Akan D."/>
            <person name="Paik S."/>
            <person name="Peterson D.L."/>
            <person name="Macrina F.L."/>
            <person name="Buck G.A."/>
        </authorList>
    </citation>
    <scope>NUCLEOTIDE SEQUENCE [LARGE SCALE GENOMIC DNA]</scope>
    <source>
        <strain>SK36</strain>
    </source>
</reference>
<protein>
    <recommendedName>
        <fullName evidence="1">Fructose-1,6-bisphosphatase class 3</fullName>
        <shortName evidence="1">FBPase class 3</shortName>
        <ecNumber evidence="1">3.1.3.11</ecNumber>
    </recommendedName>
    <alternativeName>
        <fullName evidence="1">D-fructose-1,6-bisphosphate 1-phosphohydrolase class 3</fullName>
    </alternativeName>
</protein>
<evidence type="ECO:0000255" key="1">
    <source>
        <dbReference type="HAMAP-Rule" id="MF_01854"/>
    </source>
</evidence>
<name>F16PC_STRSV</name>
<gene>
    <name evidence="1" type="primary">fbp</name>
    <name type="ordered locus">SSA_1056</name>
</gene>
<organism>
    <name type="scientific">Streptococcus sanguinis (strain SK36)</name>
    <dbReference type="NCBI Taxonomy" id="388919"/>
    <lineage>
        <taxon>Bacteria</taxon>
        <taxon>Bacillati</taxon>
        <taxon>Bacillota</taxon>
        <taxon>Bacilli</taxon>
        <taxon>Lactobacillales</taxon>
        <taxon>Streptococcaceae</taxon>
        <taxon>Streptococcus</taxon>
    </lineage>
</organism>
<comment type="catalytic activity">
    <reaction evidence="1">
        <text>beta-D-fructose 1,6-bisphosphate + H2O = beta-D-fructose 6-phosphate + phosphate</text>
        <dbReference type="Rhea" id="RHEA:11064"/>
        <dbReference type="ChEBI" id="CHEBI:15377"/>
        <dbReference type="ChEBI" id="CHEBI:32966"/>
        <dbReference type="ChEBI" id="CHEBI:43474"/>
        <dbReference type="ChEBI" id="CHEBI:57634"/>
        <dbReference type="EC" id="3.1.3.11"/>
    </reaction>
</comment>
<comment type="cofactor">
    <cofactor evidence="1">
        <name>Mn(2+)</name>
        <dbReference type="ChEBI" id="CHEBI:29035"/>
    </cofactor>
</comment>
<comment type="pathway">
    <text evidence="1">Carbohydrate biosynthesis; gluconeogenesis.</text>
</comment>
<comment type="similarity">
    <text evidence="1">Belongs to the FBPase class 3 family.</text>
</comment>
<dbReference type="EC" id="3.1.3.11" evidence="1"/>
<dbReference type="EMBL" id="CP000387">
    <property type="protein sequence ID" value="ABN44470.1"/>
    <property type="molecule type" value="Genomic_DNA"/>
</dbReference>
<dbReference type="RefSeq" id="WP_011836894.1">
    <property type="nucleotide sequence ID" value="NC_009009.1"/>
</dbReference>
<dbReference type="RefSeq" id="YP_001035020.1">
    <property type="nucleotide sequence ID" value="NC_009009.1"/>
</dbReference>
<dbReference type="STRING" id="388919.SSA_1056"/>
<dbReference type="KEGG" id="ssa:SSA_1056"/>
<dbReference type="PATRIC" id="fig|388919.9.peg.1002"/>
<dbReference type="eggNOG" id="COG3855">
    <property type="taxonomic scope" value="Bacteria"/>
</dbReference>
<dbReference type="HOGENOM" id="CLU_028392_2_0_9"/>
<dbReference type="OrthoDB" id="9779903at2"/>
<dbReference type="UniPathway" id="UPA00138"/>
<dbReference type="Proteomes" id="UP000002148">
    <property type="component" value="Chromosome"/>
</dbReference>
<dbReference type="GO" id="GO:0042132">
    <property type="term" value="F:fructose 1,6-bisphosphate 1-phosphatase activity"/>
    <property type="evidence" value="ECO:0007669"/>
    <property type="project" value="UniProtKB-UniRule"/>
</dbReference>
<dbReference type="GO" id="GO:0006094">
    <property type="term" value="P:gluconeogenesis"/>
    <property type="evidence" value="ECO:0007669"/>
    <property type="project" value="UniProtKB-UniRule"/>
</dbReference>
<dbReference type="Gene3D" id="3.60.21.10">
    <property type="match status" value="1"/>
</dbReference>
<dbReference type="HAMAP" id="MF_01854">
    <property type="entry name" value="FBPase_class3"/>
    <property type="match status" value="1"/>
</dbReference>
<dbReference type="InterPro" id="IPR009164">
    <property type="entry name" value="FBPtase_class3"/>
</dbReference>
<dbReference type="InterPro" id="IPR029052">
    <property type="entry name" value="Metallo-depent_PP-like"/>
</dbReference>
<dbReference type="Pfam" id="PF06874">
    <property type="entry name" value="FBPase_2"/>
    <property type="match status" value="1"/>
</dbReference>
<dbReference type="SUPFAM" id="SSF56300">
    <property type="entry name" value="Metallo-dependent phosphatases"/>
    <property type="match status" value="2"/>
</dbReference>
<accession>A3CMR5</accession>
<keyword id="KW-0119">Carbohydrate metabolism</keyword>
<keyword id="KW-0378">Hydrolase</keyword>
<keyword id="KW-0464">Manganese</keyword>
<keyword id="KW-1185">Reference proteome</keyword>
<feature type="chain" id="PRO_0000363116" description="Fructose-1,6-bisphosphatase class 3">
    <location>
        <begin position="1"/>
        <end position="636"/>
    </location>
</feature>
<sequence length="636" mass="73073">MEQYKRILLKEFDSRQKVITELTNLEAILNLPKGTELYISDIHGEFAAFDYILRSCAGILNEKIKDCFGDSLSEVHKDRLSALVSYPELVLGEETKGQDWYQETIPQLLNLLAFAGAKYSRSKVRKALPPQYAYIIEELLYSDTALADKKSYFENILTYVIELREAVPFILGLSRSIRQLLIDHLHVVGDIFDRGVGSAQVIDELQHFHSLDIQWGNHDIIWMGAFFGSKACLLNVLRIAARYGYLWDIEKDYGLNLRSLTLFADKTYQSNPKFRPILGGREQEFSEEEILQLEKVHQALSIIQFKLENQLIKRRPEFQMQDHVMLDKIDYWEESITIDDTKHALVNTCFQTINPENPSALTPEENQAVDSMLASFQSSLKMAEHMSLLMNKGSMYKIYNKHLLFHGCIPLEPSGEFQPFILNQAHYAGKELLDFFEYHIRQAAKDKEVGDDLSTDLIWYCWKGKLSPLFGKEKMTTLERYFIEDKETHKEVENSYFSYRNSEKVCQLILEEFGLFSQESRMVNGHTPVKTGKGESPIRGGGLLFVIDGGLCKAYQKKTGTAGYSLLNNSYGFQLVTHQPFQNAQKVVESPFAQTSLKKVIENVEERTLIKSTTIGQSLLAQQQELFGLLHEFYDR</sequence>